<evidence type="ECO:0000255" key="1">
    <source>
        <dbReference type="HAMAP-Rule" id="MF_00444"/>
    </source>
</evidence>
<dbReference type="EC" id="3.4.21.92" evidence="1"/>
<dbReference type="EMBL" id="AE001439">
    <property type="protein sequence ID" value="AAD06311.1"/>
    <property type="molecule type" value="Genomic_DNA"/>
</dbReference>
<dbReference type="PIR" id="H71895">
    <property type="entry name" value="H71895"/>
</dbReference>
<dbReference type="RefSeq" id="WP_000540576.1">
    <property type="nucleotide sequence ID" value="NZ_CP011330.1"/>
</dbReference>
<dbReference type="SMR" id="Q9ZL50"/>
<dbReference type="MEROPS" id="S14.001"/>
<dbReference type="KEGG" id="hpj:jhp_0730"/>
<dbReference type="PATRIC" id="fig|85963.30.peg.246"/>
<dbReference type="eggNOG" id="COG0740">
    <property type="taxonomic scope" value="Bacteria"/>
</dbReference>
<dbReference type="Proteomes" id="UP000000804">
    <property type="component" value="Chromosome"/>
</dbReference>
<dbReference type="GO" id="GO:0005737">
    <property type="term" value="C:cytoplasm"/>
    <property type="evidence" value="ECO:0007669"/>
    <property type="project" value="UniProtKB-SubCell"/>
</dbReference>
<dbReference type="GO" id="GO:0009368">
    <property type="term" value="C:endopeptidase Clp complex"/>
    <property type="evidence" value="ECO:0007669"/>
    <property type="project" value="TreeGrafter"/>
</dbReference>
<dbReference type="GO" id="GO:0004176">
    <property type="term" value="F:ATP-dependent peptidase activity"/>
    <property type="evidence" value="ECO:0007669"/>
    <property type="project" value="InterPro"/>
</dbReference>
<dbReference type="GO" id="GO:0051117">
    <property type="term" value="F:ATPase binding"/>
    <property type="evidence" value="ECO:0007669"/>
    <property type="project" value="TreeGrafter"/>
</dbReference>
<dbReference type="GO" id="GO:0004252">
    <property type="term" value="F:serine-type endopeptidase activity"/>
    <property type="evidence" value="ECO:0007669"/>
    <property type="project" value="UniProtKB-UniRule"/>
</dbReference>
<dbReference type="GO" id="GO:0006515">
    <property type="term" value="P:protein quality control for misfolded or incompletely synthesized proteins"/>
    <property type="evidence" value="ECO:0007669"/>
    <property type="project" value="TreeGrafter"/>
</dbReference>
<dbReference type="CDD" id="cd07017">
    <property type="entry name" value="S14_ClpP_2"/>
    <property type="match status" value="1"/>
</dbReference>
<dbReference type="FunFam" id="3.90.226.10:FF:000001">
    <property type="entry name" value="ATP-dependent Clp protease proteolytic subunit"/>
    <property type="match status" value="1"/>
</dbReference>
<dbReference type="Gene3D" id="3.90.226.10">
    <property type="entry name" value="2-enoyl-CoA Hydratase, Chain A, domain 1"/>
    <property type="match status" value="1"/>
</dbReference>
<dbReference type="HAMAP" id="MF_00444">
    <property type="entry name" value="ClpP"/>
    <property type="match status" value="1"/>
</dbReference>
<dbReference type="InterPro" id="IPR001907">
    <property type="entry name" value="ClpP"/>
</dbReference>
<dbReference type="InterPro" id="IPR029045">
    <property type="entry name" value="ClpP/crotonase-like_dom_sf"/>
</dbReference>
<dbReference type="InterPro" id="IPR023562">
    <property type="entry name" value="ClpP/TepA"/>
</dbReference>
<dbReference type="InterPro" id="IPR033135">
    <property type="entry name" value="ClpP_His_AS"/>
</dbReference>
<dbReference type="InterPro" id="IPR018215">
    <property type="entry name" value="ClpP_Ser_AS"/>
</dbReference>
<dbReference type="NCBIfam" id="TIGR00493">
    <property type="entry name" value="clpP"/>
    <property type="match status" value="1"/>
</dbReference>
<dbReference type="NCBIfam" id="NF001368">
    <property type="entry name" value="PRK00277.1"/>
    <property type="match status" value="1"/>
</dbReference>
<dbReference type="NCBIfam" id="NF009205">
    <property type="entry name" value="PRK12553.1"/>
    <property type="match status" value="1"/>
</dbReference>
<dbReference type="PANTHER" id="PTHR10381">
    <property type="entry name" value="ATP-DEPENDENT CLP PROTEASE PROTEOLYTIC SUBUNIT"/>
    <property type="match status" value="1"/>
</dbReference>
<dbReference type="PANTHER" id="PTHR10381:SF70">
    <property type="entry name" value="ATP-DEPENDENT CLP PROTEASE PROTEOLYTIC SUBUNIT"/>
    <property type="match status" value="1"/>
</dbReference>
<dbReference type="Pfam" id="PF00574">
    <property type="entry name" value="CLP_protease"/>
    <property type="match status" value="1"/>
</dbReference>
<dbReference type="PRINTS" id="PR00127">
    <property type="entry name" value="CLPPROTEASEP"/>
</dbReference>
<dbReference type="SUPFAM" id="SSF52096">
    <property type="entry name" value="ClpP/crotonase"/>
    <property type="match status" value="1"/>
</dbReference>
<dbReference type="PROSITE" id="PS00382">
    <property type="entry name" value="CLP_PROTEASE_HIS"/>
    <property type="match status" value="1"/>
</dbReference>
<dbReference type="PROSITE" id="PS00381">
    <property type="entry name" value="CLP_PROTEASE_SER"/>
    <property type="match status" value="1"/>
</dbReference>
<protein>
    <recommendedName>
        <fullName evidence="1">ATP-dependent Clp protease proteolytic subunit</fullName>
        <ecNumber evidence="1">3.4.21.92</ecNumber>
    </recommendedName>
    <alternativeName>
        <fullName evidence="1">Endopeptidase Clp</fullName>
    </alternativeName>
</protein>
<accession>Q9ZL50</accession>
<keyword id="KW-0963">Cytoplasm</keyword>
<keyword id="KW-0378">Hydrolase</keyword>
<keyword id="KW-0645">Protease</keyword>
<keyword id="KW-0720">Serine protease</keyword>
<feature type="chain" id="PRO_0000179569" description="ATP-dependent Clp protease proteolytic subunit">
    <location>
        <begin position="1"/>
        <end position="195"/>
    </location>
</feature>
<feature type="active site" description="Nucleophile" evidence="1">
    <location>
        <position position="98"/>
    </location>
</feature>
<feature type="active site" evidence="1">
    <location>
        <position position="123"/>
    </location>
</feature>
<sequence length="195" mass="21409">MGYIPYVIENTERGERSYDIYSRLLKDRIVLLSGEINDSVASSIVAQLLFLEAEDPEKDIGLYINSPGGVITSGLSIYDTMNFIRPDVSTICIGQAASMGAFLLSCGAKGKRFSLPHSRIMIHQPLGGAQGQASDIEIISNEILRLKGLMNSILAQNSGQSLEQIAKDTDRDFYMSAKEAKEYGLIDKVLQKNVK</sequence>
<name>CLPP_HELPJ</name>
<proteinExistence type="inferred from homology"/>
<reference key="1">
    <citation type="journal article" date="1999" name="Nature">
        <title>Genomic sequence comparison of two unrelated isolates of the human gastric pathogen Helicobacter pylori.</title>
        <authorList>
            <person name="Alm R.A."/>
            <person name="Ling L.-S.L."/>
            <person name="Moir D.T."/>
            <person name="King B.L."/>
            <person name="Brown E.D."/>
            <person name="Doig P.C."/>
            <person name="Smith D.R."/>
            <person name="Noonan B."/>
            <person name="Guild B.C."/>
            <person name="deJonge B.L."/>
            <person name="Carmel G."/>
            <person name="Tummino P.J."/>
            <person name="Caruso A."/>
            <person name="Uria-Nickelsen M."/>
            <person name="Mills D.M."/>
            <person name="Ives C."/>
            <person name="Gibson R."/>
            <person name="Merberg D."/>
            <person name="Mills S.D."/>
            <person name="Jiang Q."/>
            <person name="Taylor D.E."/>
            <person name="Vovis G.F."/>
            <person name="Trust T.J."/>
        </authorList>
    </citation>
    <scope>NUCLEOTIDE SEQUENCE [LARGE SCALE GENOMIC DNA]</scope>
    <source>
        <strain>J99 / ATCC 700824</strain>
    </source>
</reference>
<gene>
    <name evidence="1" type="primary">clpP</name>
    <name type="ordered locus">jhp_0730</name>
</gene>
<organism>
    <name type="scientific">Helicobacter pylori (strain J99 / ATCC 700824)</name>
    <name type="common">Campylobacter pylori J99</name>
    <dbReference type="NCBI Taxonomy" id="85963"/>
    <lineage>
        <taxon>Bacteria</taxon>
        <taxon>Pseudomonadati</taxon>
        <taxon>Campylobacterota</taxon>
        <taxon>Epsilonproteobacteria</taxon>
        <taxon>Campylobacterales</taxon>
        <taxon>Helicobacteraceae</taxon>
        <taxon>Helicobacter</taxon>
    </lineage>
</organism>
<comment type="function">
    <text evidence="1">Cleaves peptides in various proteins in a process that requires ATP hydrolysis. Has a chymotrypsin-like activity. Plays a major role in the degradation of misfolded proteins.</text>
</comment>
<comment type="catalytic activity">
    <reaction evidence="1">
        <text>Hydrolysis of proteins to small peptides in the presence of ATP and magnesium. alpha-casein is the usual test substrate. In the absence of ATP, only oligopeptides shorter than five residues are hydrolyzed (such as succinyl-Leu-Tyr-|-NHMec, and Leu-Tyr-Leu-|-Tyr-Trp, in which cleavage of the -Tyr-|-Leu- and -Tyr-|-Trp bonds also occurs).</text>
        <dbReference type="EC" id="3.4.21.92"/>
    </reaction>
</comment>
<comment type="subunit">
    <text evidence="1">Fourteen ClpP subunits assemble into 2 heptameric rings which stack back to back to give a disk-like structure with a central cavity, resembling the structure of eukaryotic proteasomes.</text>
</comment>
<comment type="subcellular location">
    <subcellularLocation>
        <location evidence="1">Cytoplasm</location>
    </subcellularLocation>
</comment>
<comment type="similarity">
    <text evidence="1">Belongs to the peptidase S14 family.</text>
</comment>